<comment type="function">
    <text evidence="1">Catalyzes the attachment of threonine to tRNA(Thr) in a two-step reaction: L-threonine is first activated by ATP to form Thr-AMP and then transferred to the acceptor end of tRNA(Thr). Also edits incorrectly charged L-seryl-tRNA(Thr).</text>
</comment>
<comment type="catalytic activity">
    <reaction evidence="1">
        <text>tRNA(Thr) + L-threonine + ATP = L-threonyl-tRNA(Thr) + AMP + diphosphate + H(+)</text>
        <dbReference type="Rhea" id="RHEA:24624"/>
        <dbReference type="Rhea" id="RHEA-COMP:9670"/>
        <dbReference type="Rhea" id="RHEA-COMP:9704"/>
        <dbReference type="ChEBI" id="CHEBI:15378"/>
        <dbReference type="ChEBI" id="CHEBI:30616"/>
        <dbReference type="ChEBI" id="CHEBI:33019"/>
        <dbReference type="ChEBI" id="CHEBI:57926"/>
        <dbReference type="ChEBI" id="CHEBI:78442"/>
        <dbReference type="ChEBI" id="CHEBI:78534"/>
        <dbReference type="ChEBI" id="CHEBI:456215"/>
        <dbReference type="EC" id="6.1.1.3"/>
    </reaction>
</comment>
<comment type="cofactor">
    <cofactor evidence="1">
        <name>Zn(2+)</name>
        <dbReference type="ChEBI" id="CHEBI:29105"/>
    </cofactor>
    <text evidence="1">Binds 1 zinc ion per subunit.</text>
</comment>
<comment type="subunit">
    <text evidence="1">Homodimer.</text>
</comment>
<comment type="subcellular location">
    <subcellularLocation>
        <location evidence="1">Cytoplasm</location>
    </subcellularLocation>
</comment>
<comment type="similarity">
    <text evidence="1">Belongs to the class-II aminoacyl-tRNA synthetase family.</text>
</comment>
<gene>
    <name evidence="1" type="primary">thrS</name>
    <name type="ordered locus">LEUM_0662</name>
</gene>
<sequence length="652" mass="74214">MAEISLTFPDGAIKKFDEGIKPIGVAESISKSLAKKSVSGKINGSYIGMNDVITESGDFQLITTSDSEALDLLRHSASHLLAQALKRIPKFANIHFGVGPFIENGFYYDTDNGAGNQVSIEDFPEIEAIMHKIVKEDLPILSREITRDEALEIFADDPYKVELVNDLPVDEKITIAVQGDHIELDKGGLVPSTGWIKHFKLTSVAGAYWRGDSSNPMMQRVYGTAFWKAADVEAEIARREEAKERDHRVIGRDLDLFFTSQEVGSGLPVWLPNGATIRRQVERYITDKELSNGYQHVYTPVLSNLNLYKTSGHWDHYREDMFPPMDMGDGEFLELRPMNCPSHIMVFNHKPRSYRELPMRIAELGMMHRYEKSGALTGLSRVREMTLNDGHTFVEPEKLEEEFKSILTMMMGVYRDFNIKDYRFRLSYRDPKNTEKYFDDDEMWEKSQKQLKTAMDDLGLDYFEAEGEAAFYGPKLDVQTKTALGNEETLSTIQLDFLLPERFDLKYIGRDGLDNHRPVMLHRGIVGTMERFTAYLIEMYKGAFPTWLSPLQVQIIPVNLGAHGNYANAVQQKLQDAGLRANVETKDAKMGYLIREAQTNKIPYTLVLGDSEVNSNTVTVRKYGDTKTVTMSYDEFQYLILSDVSNYSRETE</sequence>
<keyword id="KW-0030">Aminoacyl-tRNA synthetase</keyword>
<keyword id="KW-0067">ATP-binding</keyword>
<keyword id="KW-0963">Cytoplasm</keyword>
<keyword id="KW-0436">Ligase</keyword>
<keyword id="KW-0479">Metal-binding</keyword>
<keyword id="KW-0547">Nucleotide-binding</keyword>
<keyword id="KW-0648">Protein biosynthesis</keyword>
<keyword id="KW-1185">Reference proteome</keyword>
<keyword id="KW-0694">RNA-binding</keyword>
<keyword id="KW-0820">tRNA-binding</keyword>
<keyword id="KW-0862">Zinc</keyword>
<evidence type="ECO:0000255" key="1">
    <source>
        <dbReference type="HAMAP-Rule" id="MF_00184"/>
    </source>
</evidence>
<evidence type="ECO:0000255" key="2">
    <source>
        <dbReference type="PROSITE-ProRule" id="PRU01228"/>
    </source>
</evidence>
<reference key="1">
    <citation type="journal article" date="2006" name="Proc. Natl. Acad. Sci. U.S.A.">
        <title>Comparative genomics of the lactic acid bacteria.</title>
        <authorList>
            <person name="Makarova K.S."/>
            <person name="Slesarev A."/>
            <person name="Wolf Y.I."/>
            <person name="Sorokin A."/>
            <person name="Mirkin B."/>
            <person name="Koonin E.V."/>
            <person name="Pavlov A."/>
            <person name="Pavlova N."/>
            <person name="Karamychev V."/>
            <person name="Polouchine N."/>
            <person name="Shakhova V."/>
            <person name="Grigoriev I."/>
            <person name="Lou Y."/>
            <person name="Rohksar D."/>
            <person name="Lucas S."/>
            <person name="Huang K."/>
            <person name="Goodstein D.M."/>
            <person name="Hawkins T."/>
            <person name="Plengvidhya V."/>
            <person name="Welker D."/>
            <person name="Hughes J."/>
            <person name="Goh Y."/>
            <person name="Benson A."/>
            <person name="Baldwin K."/>
            <person name="Lee J.-H."/>
            <person name="Diaz-Muniz I."/>
            <person name="Dosti B."/>
            <person name="Smeianov V."/>
            <person name="Wechter W."/>
            <person name="Barabote R."/>
            <person name="Lorca G."/>
            <person name="Altermann E."/>
            <person name="Barrangou R."/>
            <person name="Ganesan B."/>
            <person name="Xie Y."/>
            <person name="Rawsthorne H."/>
            <person name="Tamir D."/>
            <person name="Parker C."/>
            <person name="Breidt F."/>
            <person name="Broadbent J.R."/>
            <person name="Hutkins R."/>
            <person name="O'Sullivan D."/>
            <person name="Steele J."/>
            <person name="Unlu G."/>
            <person name="Saier M.H. Jr."/>
            <person name="Klaenhammer T."/>
            <person name="Richardson P."/>
            <person name="Kozyavkin S."/>
            <person name="Weimer B.C."/>
            <person name="Mills D.A."/>
        </authorList>
    </citation>
    <scope>NUCLEOTIDE SEQUENCE [LARGE SCALE GENOMIC DNA]</scope>
    <source>
        <strain>ATCC 8293 / DSM 20343 / BCRC 11652 / CCM 1803 / JCM 6124 / NCDO 523 / NBRC 100496 / NCIMB 8023 / NCTC 12954 / NRRL B-1118 / 37Y</strain>
    </source>
</reference>
<name>SYT_LEUMM</name>
<protein>
    <recommendedName>
        <fullName evidence="1">Threonine--tRNA ligase</fullName>
        <ecNumber evidence="1">6.1.1.3</ecNumber>
    </recommendedName>
    <alternativeName>
        <fullName evidence="1">Threonyl-tRNA synthetase</fullName>
        <shortName evidence="1">ThrRS</shortName>
    </alternativeName>
</protein>
<accession>Q03YF0</accession>
<proteinExistence type="inferred from homology"/>
<dbReference type="EC" id="6.1.1.3" evidence="1"/>
<dbReference type="EMBL" id="CP000414">
    <property type="protein sequence ID" value="ABJ61772.1"/>
    <property type="molecule type" value="Genomic_DNA"/>
</dbReference>
<dbReference type="RefSeq" id="WP_011679466.1">
    <property type="nucleotide sequence ID" value="NC_008531.1"/>
</dbReference>
<dbReference type="SMR" id="Q03YF0"/>
<dbReference type="EnsemblBacteria" id="ABJ61772">
    <property type="protein sequence ID" value="ABJ61772"/>
    <property type="gene ID" value="LEUM_0662"/>
</dbReference>
<dbReference type="GeneID" id="29577678"/>
<dbReference type="KEGG" id="lme:LEUM_0662"/>
<dbReference type="eggNOG" id="COG0441">
    <property type="taxonomic scope" value="Bacteria"/>
</dbReference>
<dbReference type="HOGENOM" id="CLU_008554_3_2_9"/>
<dbReference type="Proteomes" id="UP000000362">
    <property type="component" value="Chromosome"/>
</dbReference>
<dbReference type="GO" id="GO:0005737">
    <property type="term" value="C:cytoplasm"/>
    <property type="evidence" value="ECO:0007669"/>
    <property type="project" value="UniProtKB-SubCell"/>
</dbReference>
<dbReference type="GO" id="GO:0005524">
    <property type="term" value="F:ATP binding"/>
    <property type="evidence" value="ECO:0007669"/>
    <property type="project" value="UniProtKB-UniRule"/>
</dbReference>
<dbReference type="GO" id="GO:0140096">
    <property type="term" value="F:catalytic activity, acting on a protein"/>
    <property type="evidence" value="ECO:0007669"/>
    <property type="project" value="UniProtKB-ARBA"/>
</dbReference>
<dbReference type="GO" id="GO:0046872">
    <property type="term" value="F:metal ion binding"/>
    <property type="evidence" value="ECO:0007669"/>
    <property type="project" value="UniProtKB-KW"/>
</dbReference>
<dbReference type="GO" id="GO:0004829">
    <property type="term" value="F:threonine-tRNA ligase activity"/>
    <property type="evidence" value="ECO:0007669"/>
    <property type="project" value="UniProtKB-UniRule"/>
</dbReference>
<dbReference type="GO" id="GO:0016740">
    <property type="term" value="F:transferase activity"/>
    <property type="evidence" value="ECO:0007669"/>
    <property type="project" value="UniProtKB-ARBA"/>
</dbReference>
<dbReference type="GO" id="GO:0000049">
    <property type="term" value="F:tRNA binding"/>
    <property type="evidence" value="ECO:0007669"/>
    <property type="project" value="UniProtKB-KW"/>
</dbReference>
<dbReference type="GO" id="GO:0006435">
    <property type="term" value="P:threonyl-tRNA aminoacylation"/>
    <property type="evidence" value="ECO:0007669"/>
    <property type="project" value="UniProtKB-UniRule"/>
</dbReference>
<dbReference type="CDD" id="cd01667">
    <property type="entry name" value="TGS_ThrRS"/>
    <property type="match status" value="1"/>
</dbReference>
<dbReference type="CDD" id="cd00860">
    <property type="entry name" value="ThrRS_anticodon"/>
    <property type="match status" value="1"/>
</dbReference>
<dbReference type="CDD" id="cd00771">
    <property type="entry name" value="ThrRS_core"/>
    <property type="match status" value="1"/>
</dbReference>
<dbReference type="FunFam" id="3.30.930.10:FF:000002">
    <property type="entry name" value="Threonine--tRNA ligase"/>
    <property type="match status" value="1"/>
</dbReference>
<dbReference type="FunFam" id="3.40.50.800:FF:000001">
    <property type="entry name" value="Threonine--tRNA ligase"/>
    <property type="match status" value="1"/>
</dbReference>
<dbReference type="FunFam" id="3.30.980.10:FF:000005">
    <property type="entry name" value="Threonyl-tRNA synthetase, mitochondrial"/>
    <property type="match status" value="1"/>
</dbReference>
<dbReference type="Gene3D" id="3.10.20.30">
    <property type="match status" value="1"/>
</dbReference>
<dbReference type="Gene3D" id="3.30.54.20">
    <property type="match status" value="1"/>
</dbReference>
<dbReference type="Gene3D" id="3.40.50.800">
    <property type="entry name" value="Anticodon-binding domain"/>
    <property type="match status" value="1"/>
</dbReference>
<dbReference type="Gene3D" id="3.30.930.10">
    <property type="entry name" value="Bira Bifunctional Protein, Domain 2"/>
    <property type="match status" value="1"/>
</dbReference>
<dbReference type="Gene3D" id="3.30.980.10">
    <property type="entry name" value="Threonyl-trna Synthetase, Chain A, domain 2"/>
    <property type="match status" value="1"/>
</dbReference>
<dbReference type="HAMAP" id="MF_00184">
    <property type="entry name" value="Thr_tRNA_synth"/>
    <property type="match status" value="1"/>
</dbReference>
<dbReference type="InterPro" id="IPR002314">
    <property type="entry name" value="aa-tRNA-synt_IIb"/>
</dbReference>
<dbReference type="InterPro" id="IPR006195">
    <property type="entry name" value="aa-tRNA-synth_II"/>
</dbReference>
<dbReference type="InterPro" id="IPR045864">
    <property type="entry name" value="aa-tRNA-synth_II/BPL/LPL"/>
</dbReference>
<dbReference type="InterPro" id="IPR004154">
    <property type="entry name" value="Anticodon-bd"/>
</dbReference>
<dbReference type="InterPro" id="IPR036621">
    <property type="entry name" value="Anticodon-bd_dom_sf"/>
</dbReference>
<dbReference type="InterPro" id="IPR012675">
    <property type="entry name" value="Beta-grasp_dom_sf"/>
</dbReference>
<dbReference type="InterPro" id="IPR004095">
    <property type="entry name" value="TGS"/>
</dbReference>
<dbReference type="InterPro" id="IPR012676">
    <property type="entry name" value="TGS-like"/>
</dbReference>
<dbReference type="InterPro" id="IPR002320">
    <property type="entry name" value="Thr-tRNA-ligase_IIa"/>
</dbReference>
<dbReference type="InterPro" id="IPR018163">
    <property type="entry name" value="Thr/Ala-tRNA-synth_IIc_edit"/>
</dbReference>
<dbReference type="InterPro" id="IPR047246">
    <property type="entry name" value="ThrRS_anticodon"/>
</dbReference>
<dbReference type="InterPro" id="IPR033728">
    <property type="entry name" value="ThrRS_core"/>
</dbReference>
<dbReference type="InterPro" id="IPR012947">
    <property type="entry name" value="tRNA_SAD"/>
</dbReference>
<dbReference type="NCBIfam" id="TIGR00418">
    <property type="entry name" value="thrS"/>
    <property type="match status" value="1"/>
</dbReference>
<dbReference type="PANTHER" id="PTHR11451:SF56">
    <property type="entry name" value="THREONINE--TRNA LIGASE 1"/>
    <property type="match status" value="1"/>
</dbReference>
<dbReference type="PANTHER" id="PTHR11451">
    <property type="entry name" value="THREONINE-TRNA LIGASE"/>
    <property type="match status" value="1"/>
</dbReference>
<dbReference type="Pfam" id="PF03129">
    <property type="entry name" value="HGTP_anticodon"/>
    <property type="match status" value="1"/>
</dbReference>
<dbReference type="Pfam" id="PF02824">
    <property type="entry name" value="TGS"/>
    <property type="match status" value="1"/>
</dbReference>
<dbReference type="Pfam" id="PF00587">
    <property type="entry name" value="tRNA-synt_2b"/>
    <property type="match status" value="1"/>
</dbReference>
<dbReference type="Pfam" id="PF07973">
    <property type="entry name" value="tRNA_SAD"/>
    <property type="match status" value="1"/>
</dbReference>
<dbReference type="PRINTS" id="PR01047">
    <property type="entry name" value="TRNASYNTHTHR"/>
</dbReference>
<dbReference type="SMART" id="SM00863">
    <property type="entry name" value="tRNA_SAD"/>
    <property type="match status" value="1"/>
</dbReference>
<dbReference type="SUPFAM" id="SSF52954">
    <property type="entry name" value="Class II aaRS ABD-related"/>
    <property type="match status" value="1"/>
</dbReference>
<dbReference type="SUPFAM" id="SSF55681">
    <property type="entry name" value="Class II aaRS and biotin synthetases"/>
    <property type="match status" value="1"/>
</dbReference>
<dbReference type="SUPFAM" id="SSF81271">
    <property type="entry name" value="TGS-like"/>
    <property type="match status" value="1"/>
</dbReference>
<dbReference type="SUPFAM" id="SSF55186">
    <property type="entry name" value="ThrRS/AlaRS common domain"/>
    <property type="match status" value="1"/>
</dbReference>
<dbReference type="PROSITE" id="PS50862">
    <property type="entry name" value="AA_TRNA_LIGASE_II"/>
    <property type="match status" value="1"/>
</dbReference>
<dbReference type="PROSITE" id="PS51880">
    <property type="entry name" value="TGS"/>
    <property type="match status" value="1"/>
</dbReference>
<feature type="chain" id="PRO_1000020418" description="Threonine--tRNA ligase">
    <location>
        <begin position="1"/>
        <end position="652"/>
    </location>
</feature>
<feature type="domain" description="TGS" evidence="2">
    <location>
        <begin position="1"/>
        <end position="63"/>
    </location>
</feature>
<feature type="region of interest" description="Catalytic" evidence="1">
    <location>
        <begin position="246"/>
        <end position="545"/>
    </location>
</feature>
<feature type="binding site" evidence="1">
    <location>
        <position position="340"/>
    </location>
    <ligand>
        <name>Zn(2+)</name>
        <dbReference type="ChEBI" id="CHEBI:29105"/>
    </ligand>
</feature>
<feature type="binding site" evidence="1">
    <location>
        <position position="391"/>
    </location>
    <ligand>
        <name>Zn(2+)</name>
        <dbReference type="ChEBI" id="CHEBI:29105"/>
    </ligand>
</feature>
<feature type="binding site" evidence="1">
    <location>
        <position position="522"/>
    </location>
    <ligand>
        <name>Zn(2+)</name>
        <dbReference type="ChEBI" id="CHEBI:29105"/>
    </ligand>
</feature>
<organism>
    <name type="scientific">Leuconostoc mesenteroides subsp. mesenteroides (strain ATCC 8293 / DSM 20343 / BCRC 11652 / CCM 1803 / JCM 6124 / NCDO 523 / NBRC 100496 / NCIMB 8023 / NCTC 12954 / NRRL B-1118 / 37Y)</name>
    <dbReference type="NCBI Taxonomy" id="203120"/>
    <lineage>
        <taxon>Bacteria</taxon>
        <taxon>Bacillati</taxon>
        <taxon>Bacillota</taxon>
        <taxon>Bacilli</taxon>
        <taxon>Lactobacillales</taxon>
        <taxon>Lactobacillaceae</taxon>
        <taxon>Leuconostoc</taxon>
    </lineage>
</organism>